<name>PDXT_MYCSJ</name>
<accession>A3PYU8</accession>
<organism>
    <name type="scientific">Mycobacterium sp. (strain JLS)</name>
    <dbReference type="NCBI Taxonomy" id="164757"/>
    <lineage>
        <taxon>Bacteria</taxon>
        <taxon>Bacillati</taxon>
        <taxon>Actinomycetota</taxon>
        <taxon>Actinomycetes</taxon>
        <taxon>Mycobacteriales</taxon>
        <taxon>Mycobacteriaceae</taxon>
        <taxon>Mycobacterium</taxon>
    </lineage>
</organism>
<dbReference type="EC" id="4.3.3.6" evidence="1"/>
<dbReference type="EC" id="3.5.1.2" evidence="1"/>
<dbReference type="EMBL" id="CP000580">
    <property type="protein sequence ID" value="ABN98075.1"/>
    <property type="molecule type" value="Genomic_DNA"/>
</dbReference>
<dbReference type="SMR" id="A3PYU8"/>
<dbReference type="MEROPS" id="C26.A32"/>
<dbReference type="KEGG" id="mjl:Mjls_2289"/>
<dbReference type="HOGENOM" id="CLU_069674_2_0_11"/>
<dbReference type="BioCyc" id="MSP164757:G1G8C-2308-MONOMER"/>
<dbReference type="UniPathway" id="UPA00245"/>
<dbReference type="GO" id="GO:0005829">
    <property type="term" value="C:cytosol"/>
    <property type="evidence" value="ECO:0007669"/>
    <property type="project" value="TreeGrafter"/>
</dbReference>
<dbReference type="GO" id="GO:1903600">
    <property type="term" value="C:glutaminase complex"/>
    <property type="evidence" value="ECO:0007669"/>
    <property type="project" value="TreeGrafter"/>
</dbReference>
<dbReference type="GO" id="GO:0004359">
    <property type="term" value="F:glutaminase activity"/>
    <property type="evidence" value="ECO:0007669"/>
    <property type="project" value="UniProtKB-UniRule"/>
</dbReference>
<dbReference type="GO" id="GO:0036381">
    <property type="term" value="F:pyridoxal 5'-phosphate synthase (glutamine hydrolysing) activity"/>
    <property type="evidence" value="ECO:0007669"/>
    <property type="project" value="UniProtKB-UniRule"/>
</dbReference>
<dbReference type="GO" id="GO:0006543">
    <property type="term" value="P:glutamine catabolic process"/>
    <property type="evidence" value="ECO:0007669"/>
    <property type="project" value="UniProtKB-UniRule"/>
</dbReference>
<dbReference type="GO" id="GO:0042823">
    <property type="term" value="P:pyridoxal phosphate biosynthetic process"/>
    <property type="evidence" value="ECO:0007669"/>
    <property type="project" value="UniProtKB-UniRule"/>
</dbReference>
<dbReference type="GO" id="GO:0008614">
    <property type="term" value="P:pyridoxine metabolic process"/>
    <property type="evidence" value="ECO:0007669"/>
    <property type="project" value="TreeGrafter"/>
</dbReference>
<dbReference type="CDD" id="cd01749">
    <property type="entry name" value="GATase1_PB"/>
    <property type="match status" value="1"/>
</dbReference>
<dbReference type="FunFam" id="3.40.50.880:FF:000010">
    <property type="entry name" value="uncharacterized protein LOC100176842 isoform X2"/>
    <property type="match status" value="1"/>
</dbReference>
<dbReference type="Gene3D" id="3.40.50.880">
    <property type="match status" value="1"/>
</dbReference>
<dbReference type="HAMAP" id="MF_01615">
    <property type="entry name" value="PdxT"/>
    <property type="match status" value="1"/>
</dbReference>
<dbReference type="InterPro" id="IPR029062">
    <property type="entry name" value="Class_I_gatase-like"/>
</dbReference>
<dbReference type="InterPro" id="IPR002161">
    <property type="entry name" value="PdxT/SNO"/>
</dbReference>
<dbReference type="InterPro" id="IPR021196">
    <property type="entry name" value="PdxT/SNO_CS"/>
</dbReference>
<dbReference type="NCBIfam" id="TIGR03800">
    <property type="entry name" value="PLP_synth_Pdx2"/>
    <property type="match status" value="1"/>
</dbReference>
<dbReference type="PANTHER" id="PTHR31559">
    <property type="entry name" value="PYRIDOXAL 5'-PHOSPHATE SYNTHASE SUBUNIT SNO"/>
    <property type="match status" value="1"/>
</dbReference>
<dbReference type="PANTHER" id="PTHR31559:SF0">
    <property type="entry name" value="PYRIDOXAL 5'-PHOSPHATE SYNTHASE SUBUNIT SNO1-RELATED"/>
    <property type="match status" value="1"/>
</dbReference>
<dbReference type="Pfam" id="PF01174">
    <property type="entry name" value="SNO"/>
    <property type="match status" value="1"/>
</dbReference>
<dbReference type="PIRSF" id="PIRSF005639">
    <property type="entry name" value="Glut_amidoT_SNO"/>
    <property type="match status" value="1"/>
</dbReference>
<dbReference type="SUPFAM" id="SSF52317">
    <property type="entry name" value="Class I glutamine amidotransferase-like"/>
    <property type="match status" value="1"/>
</dbReference>
<dbReference type="PROSITE" id="PS01236">
    <property type="entry name" value="PDXT_SNO_1"/>
    <property type="match status" value="1"/>
</dbReference>
<dbReference type="PROSITE" id="PS51130">
    <property type="entry name" value="PDXT_SNO_2"/>
    <property type="match status" value="1"/>
</dbReference>
<reference key="1">
    <citation type="submission" date="2007-02" db="EMBL/GenBank/DDBJ databases">
        <title>Complete sequence of Mycobacterium sp. JLS.</title>
        <authorList>
            <consortium name="US DOE Joint Genome Institute"/>
            <person name="Copeland A."/>
            <person name="Lucas S."/>
            <person name="Lapidus A."/>
            <person name="Barry K."/>
            <person name="Detter J.C."/>
            <person name="Glavina del Rio T."/>
            <person name="Hammon N."/>
            <person name="Israni S."/>
            <person name="Dalin E."/>
            <person name="Tice H."/>
            <person name="Pitluck S."/>
            <person name="Chain P."/>
            <person name="Malfatti S."/>
            <person name="Shin M."/>
            <person name="Vergez L."/>
            <person name="Schmutz J."/>
            <person name="Larimer F."/>
            <person name="Land M."/>
            <person name="Hauser L."/>
            <person name="Kyrpides N."/>
            <person name="Mikhailova N."/>
            <person name="Miller C.D."/>
            <person name="Anderson A.J."/>
            <person name="Sims R.C."/>
            <person name="Richardson P."/>
        </authorList>
    </citation>
    <scope>NUCLEOTIDE SEQUENCE [LARGE SCALE GENOMIC DNA]</scope>
    <source>
        <strain>JLS</strain>
    </source>
</reference>
<comment type="function">
    <text evidence="1">Catalyzes the hydrolysis of glutamine to glutamate and ammonia as part of the biosynthesis of pyridoxal 5'-phosphate. The resulting ammonia molecule is channeled to the active site of PdxS.</text>
</comment>
<comment type="catalytic activity">
    <reaction evidence="1">
        <text>aldehydo-D-ribose 5-phosphate + D-glyceraldehyde 3-phosphate + L-glutamine = pyridoxal 5'-phosphate + L-glutamate + phosphate + 3 H2O + H(+)</text>
        <dbReference type="Rhea" id="RHEA:31507"/>
        <dbReference type="ChEBI" id="CHEBI:15377"/>
        <dbReference type="ChEBI" id="CHEBI:15378"/>
        <dbReference type="ChEBI" id="CHEBI:29985"/>
        <dbReference type="ChEBI" id="CHEBI:43474"/>
        <dbReference type="ChEBI" id="CHEBI:58273"/>
        <dbReference type="ChEBI" id="CHEBI:58359"/>
        <dbReference type="ChEBI" id="CHEBI:59776"/>
        <dbReference type="ChEBI" id="CHEBI:597326"/>
        <dbReference type="EC" id="4.3.3.6"/>
    </reaction>
</comment>
<comment type="catalytic activity">
    <reaction evidence="1">
        <text>L-glutamine + H2O = L-glutamate + NH4(+)</text>
        <dbReference type="Rhea" id="RHEA:15889"/>
        <dbReference type="ChEBI" id="CHEBI:15377"/>
        <dbReference type="ChEBI" id="CHEBI:28938"/>
        <dbReference type="ChEBI" id="CHEBI:29985"/>
        <dbReference type="ChEBI" id="CHEBI:58359"/>
        <dbReference type="EC" id="3.5.1.2"/>
    </reaction>
</comment>
<comment type="pathway">
    <text evidence="1">Cofactor biosynthesis; pyridoxal 5'-phosphate biosynthesis.</text>
</comment>
<comment type="subunit">
    <text evidence="1">In the presence of PdxS, forms a dodecamer of heterodimers. Only shows activity in the heterodimer.</text>
</comment>
<comment type="similarity">
    <text evidence="1">Belongs to the glutaminase PdxT/SNO family.</text>
</comment>
<proteinExistence type="inferred from homology"/>
<gene>
    <name evidence="1" type="primary">pdxT</name>
    <name type="ordered locus">Mjls_2289</name>
</gene>
<protein>
    <recommendedName>
        <fullName evidence="1">Pyridoxal 5'-phosphate synthase subunit PdxT</fullName>
        <ecNumber evidence="1">4.3.3.6</ecNumber>
    </recommendedName>
    <alternativeName>
        <fullName evidence="1">Pdx2</fullName>
    </alternativeName>
    <alternativeName>
        <fullName evidence="1">Pyridoxal 5'-phosphate synthase glutaminase subunit</fullName>
        <ecNumber evidence="1">3.5.1.2</ecNumber>
    </alternativeName>
</protein>
<feature type="chain" id="PRO_0000293005" description="Pyridoxal 5'-phosphate synthase subunit PdxT">
    <location>
        <begin position="1"/>
        <end position="206"/>
    </location>
</feature>
<feature type="active site" description="Nucleophile" evidence="1">
    <location>
        <position position="91"/>
    </location>
</feature>
<feature type="active site" description="Charge relay system" evidence="1">
    <location>
        <position position="187"/>
    </location>
</feature>
<feature type="active site" description="Charge relay system" evidence="1">
    <location>
        <position position="189"/>
    </location>
</feature>
<feature type="binding site" evidence="1">
    <location>
        <begin position="59"/>
        <end position="61"/>
    </location>
    <ligand>
        <name>L-glutamine</name>
        <dbReference type="ChEBI" id="CHEBI:58359"/>
    </ligand>
</feature>
<feature type="binding site" evidence="1">
    <location>
        <position position="123"/>
    </location>
    <ligand>
        <name>L-glutamine</name>
        <dbReference type="ChEBI" id="CHEBI:58359"/>
    </ligand>
</feature>
<feature type="binding site" evidence="1">
    <location>
        <begin position="151"/>
        <end position="152"/>
    </location>
    <ligand>
        <name>L-glutamine</name>
        <dbReference type="ChEBI" id="CHEBI:58359"/>
    </ligand>
</feature>
<sequence>MNAVPDGRSDKPRSVVGVLALQGDTREHLAALTEAGAEAVTVRRLRELEAVDALVIPGGESTAMSHLLREFELLEPLRARLAEGMPAYGSCAGMILLATEILDAGAAGREATPLKGIDMSVRRNAFGRQVDSFEGDIPFVGLDSSVHAVFIRAPWVERIGDGVEVLARADGHIVAVRQGRMLATAFHPEVTGDRRVHKLFVDMVSE</sequence>
<evidence type="ECO:0000255" key="1">
    <source>
        <dbReference type="HAMAP-Rule" id="MF_01615"/>
    </source>
</evidence>
<keyword id="KW-0315">Glutamine amidotransferase</keyword>
<keyword id="KW-0378">Hydrolase</keyword>
<keyword id="KW-0456">Lyase</keyword>
<keyword id="KW-0663">Pyridoxal phosphate</keyword>